<feature type="chain" id="PRO_0000403239" description="Cyanate hydratase">
    <location>
        <begin position="1"/>
        <end position="154"/>
    </location>
</feature>
<feature type="active site" evidence="1">
    <location>
        <position position="100"/>
    </location>
</feature>
<feature type="active site" evidence="1">
    <location>
        <position position="103"/>
    </location>
</feature>
<feature type="active site" evidence="1">
    <location>
        <position position="126"/>
    </location>
</feature>
<protein>
    <recommendedName>
        <fullName evidence="1">Cyanate hydratase</fullName>
        <shortName evidence="1">Cyanase</shortName>
        <ecNumber evidence="1">4.2.1.104</ecNumber>
    </recommendedName>
    <alternativeName>
        <fullName evidence="1">Cyanate hydrolase</fullName>
    </alternativeName>
    <alternativeName>
        <fullName evidence="1">Cyanate lyase</fullName>
    </alternativeName>
</protein>
<evidence type="ECO:0000255" key="1">
    <source>
        <dbReference type="HAMAP-Rule" id="MF_03139"/>
    </source>
</evidence>
<organism>
    <name type="scientific">Aspergillus clavatus (strain ATCC 1007 / CBS 513.65 / DSM 816 / NCTC 3887 / NRRL 1 / QM 1276 / 107)</name>
    <dbReference type="NCBI Taxonomy" id="344612"/>
    <lineage>
        <taxon>Eukaryota</taxon>
        <taxon>Fungi</taxon>
        <taxon>Dikarya</taxon>
        <taxon>Ascomycota</taxon>
        <taxon>Pezizomycotina</taxon>
        <taxon>Eurotiomycetes</taxon>
        <taxon>Eurotiomycetidae</taxon>
        <taxon>Eurotiales</taxon>
        <taxon>Aspergillaceae</taxon>
        <taxon>Aspergillus</taxon>
        <taxon>Aspergillus subgen. Fumigati</taxon>
    </lineage>
</organism>
<comment type="function">
    <text evidence="1">Catalyzes the reaction of cyanate with bicarbonate to produce ammonia and carbon dioxide.</text>
</comment>
<comment type="catalytic activity">
    <reaction evidence="1">
        <text>cyanate + hydrogencarbonate + 3 H(+) = NH4(+) + 2 CO2</text>
        <dbReference type="Rhea" id="RHEA:11120"/>
        <dbReference type="ChEBI" id="CHEBI:15378"/>
        <dbReference type="ChEBI" id="CHEBI:16526"/>
        <dbReference type="ChEBI" id="CHEBI:17544"/>
        <dbReference type="ChEBI" id="CHEBI:28938"/>
        <dbReference type="ChEBI" id="CHEBI:29195"/>
        <dbReference type="EC" id="4.2.1.104"/>
    </reaction>
</comment>
<comment type="similarity">
    <text evidence="1">Belongs to the cyanase family.</text>
</comment>
<dbReference type="EC" id="4.2.1.104" evidence="1"/>
<dbReference type="EMBL" id="DS027045">
    <property type="protein sequence ID" value="EAW14506.1"/>
    <property type="molecule type" value="Genomic_DNA"/>
</dbReference>
<dbReference type="RefSeq" id="XP_001275932.1">
    <property type="nucleotide sequence ID" value="XM_001275931.1"/>
</dbReference>
<dbReference type="SMR" id="A1C7Y5"/>
<dbReference type="STRING" id="344612.A1C7Y5"/>
<dbReference type="EnsemblFungi" id="EAW14506">
    <property type="protein sequence ID" value="EAW14506"/>
    <property type="gene ID" value="ACLA_075450"/>
</dbReference>
<dbReference type="GeneID" id="4707675"/>
<dbReference type="KEGG" id="act:ACLA_075450"/>
<dbReference type="VEuPathDB" id="FungiDB:ACLA_075450"/>
<dbReference type="eggNOG" id="ENOG502S3YJ">
    <property type="taxonomic scope" value="Eukaryota"/>
</dbReference>
<dbReference type="HOGENOM" id="CLU_103452_0_0_1"/>
<dbReference type="OMA" id="YELVMIN"/>
<dbReference type="OrthoDB" id="10019422at2759"/>
<dbReference type="Proteomes" id="UP000006701">
    <property type="component" value="Unassembled WGS sequence"/>
</dbReference>
<dbReference type="GO" id="GO:0008824">
    <property type="term" value="F:cyanate hydratase activity"/>
    <property type="evidence" value="ECO:0007669"/>
    <property type="project" value="UniProtKB-UniRule"/>
</dbReference>
<dbReference type="GO" id="GO:0003677">
    <property type="term" value="F:DNA binding"/>
    <property type="evidence" value="ECO:0007669"/>
    <property type="project" value="InterPro"/>
</dbReference>
<dbReference type="GO" id="GO:0009439">
    <property type="term" value="P:cyanate metabolic process"/>
    <property type="evidence" value="ECO:0007669"/>
    <property type="project" value="UniProtKB-UniRule"/>
</dbReference>
<dbReference type="CDD" id="cd00559">
    <property type="entry name" value="Cyanase_C"/>
    <property type="match status" value="1"/>
</dbReference>
<dbReference type="Gene3D" id="3.30.1160.10">
    <property type="entry name" value="Cyanate lyase, C-terminal domain"/>
    <property type="match status" value="1"/>
</dbReference>
<dbReference type="Gene3D" id="1.10.260.40">
    <property type="entry name" value="lambda repressor-like DNA-binding domains"/>
    <property type="match status" value="1"/>
</dbReference>
<dbReference type="HAMAP" id="MF_00535">
    <property type="entry name" value="Cyanate_hydrat"/>
    <property type="match status" value="1"/>
</dbReference>
<dbReference type="InterPro" id="IPR008076">
    <property type="entry name" value="Cyanase"/>
</dbReference>
<dbReference type="InterPro" id="IPR003712">
    <property type="entry name" value="Cyanate_lyase_C"/>
</dbReference>
<dbReference type="InterPro" id="IPR036581">
    <property type="entry name" value="Cyanate_lyase_C_sf"/>
</dbReference>
<dbReference type="InterPro" id="IPR010982">
    <property type="entry name" value="Lambda_DNA-bd_dom_sf"/>
</dbReference>
<dbReference type="NCBIfam" id="TIGR00673">
    <property type="entry name" value="cynS"/>
    <property type="match status" value="1"/>
</dbReference>
<dbReference type="PANTHER" id="PTHR34186">
    <property type="entry name" value="CYANATE HYDRATASE"/>
    <property type="match status" value="1"/>
</dbReference>
<dbReference type="PANTHER" id="PTHR34186:SF2">
    <property type="entry name" value="CYANATE HYDRATASE"/>
    <property type="match status" value="1"/>
</dbReference>
<dbReference type="Pfam" id="PF02560">
    <property type="entry name" value="Cyanate_lyase"/>
    <property type="match status" value="1"/>
</dbReference>
<dbReference type="PIRSF" id="PIRSF001263">
    <property type="entry name" value="Cyanate_hydratas"/>
    <property type="match status" value="1"/>
</dbReference>
<dbReference type="PRINTS" id="PR01693">
    <property type="entry name" value="CYANASE"/>
</dbReference>
<dbReference type="SMART" id="SM01116">
    <property type="entry name" value="Cyanate_lyase"/>
    <property type="match status" value="1"/>
</dbReference>
<dbReference type="SUPFAM" id="SSF55234">
    <property type="entry name" value="Cyanase C-terminal domain"/>
    <property type="match status" value="1"/>
</dbReference>
<dbReference type="SUPFAM" id="SSF47413">
    <property type="entry name" value="lambda repressor-like DNA-binding domains"/>
    <property type="match status" value="1"/>
</dbReference>
<sequence>MSLATLDATQHPNLPQSSQTLFSAKATKKLTFEQIAQHIGRNEVAAAAIFYGQAKASPEDIEKLSSLLDIPTPVLEEQLGGFPDRGRSVEMPPKEPLIYRLYEIVQNYGYAYKAVLNEKFGDGIMSAISFSTKVEKETDADGNNWAVITLRGKW</sequence>
<keyword id="KW-0456">Lyase</keyword>
<keyword id="KW-1185">Reference proteome</keyword>
<reference key="1">
    <citation type="journal article" date="2008" name="PLoS Genet.">
        <title>Genomic islands in the pathogenic filamentous fungus Aspergillus fumigatus.</title>
        <authorList>
            <person name="Fedorova N.D."/>
            <person name="Khaldi N."/>
            <person name="Joardar V.S."/>
            <person name="Maiti R."/>
            <person name="Amedeo P."/>
            <person name="Anderson M.J."/>
            <person name="Crabtree J."/>
            <person name="Silva J.C."/>
            <person name="Badger J.H."/>
            <person name="Albarraq A."/>
            <person name="Angiuoli S."/>
            <person name="Bussey H."/>
            <person name="Bowyer P."/>
            <person name="Cotty P.J."/>
            <person name="Dyer P.S."/>
            <person name="Egan A."/>
            <person name="Galens K."/>
            <person name="Fraser-Liggett C.M."/>
            <person name="Haas B.J."/>
            <person name="Inman J.M."/>
            <person name="Kent R."/>
            <person name="Lemieux S."/>
            <person name="Malavazi I."/>
            <person name="Orvis J."/>
            <person name="Roemer T."/>
            <person name="Ronning C.M."/>
            <person name="Sundaram J.P."/>
            <person name="Sutton G."/>
            <person name="Turner G."/>
            <person name="Venter J.C."/>
            <person name="White O.R."/>
            <person name="Whitty B.R."/>
            <person name="Youngman P."/>
            <person name="Wolfe K.H."/>
            <person name="Goldman G.H."/>
            <person name="Wortman J.R."/>
            <person name="Jiang B."/>
            <person name="Denning D.W."/>
            <person name="Nierman W.C."/>
        </authorList>
    </citation>
    <scope>NUCLEOTIDE SEQUENCE [LARGE SCALE GENOMIC DNA]</scope>
    <source>
        <strain>ATCC 1007 / CBS 513.65 / DSM 816 / NCTC 3887 / NRRL 1 / QM 1276 / 107</strain>
    </source>
</reference>
<accession>A1C7Y5</accession>
<gene>
    <name evidence="1" type="primary">cyn1</name>
    <name type="ORF">ACLA_075450</name>
</gene>
<name>CYNS_ASPCL</name>
<proteinExistence type="inferred from homology"/>